<sequence length="326" mass="35808">MAVYTDVAADELADFLKAYEIGDLLSYKGIAEGVENSNFLLHTTRGHFILTLYEKRVAADDLPYFLSLMAHLAARGVSCPQPATNRAGEVCGTLSGRPAVIINFLEGVWPRRPNLAHCAGVGEAMAKMHRAGLDYPSYRSNPLSVTGWRPLFNIAASRADEIQPGLRDFIAAELDYLEGNWPDQLPTGVIHADLFPDNVFFIGDKLSGLIDFPFSCNDILAYDVAICLNAWCFEPDLSFNVTKARALLNAYQRERALSEAEQAALPLLARGAAMRFLLTRLVDFLDVPAGALVRPKDPLEYVRKLRFQQNVAGIRDYGVEAAGAVA</sequence>
<comment type="catalytic activity">
    <reaction evidence="1">
        <text>L-homoserine + ATP = O-phospho-L-homoserine + ADP + H(+)</text>
        <dbReference type="Rhea" id="RHEA:13985"/>
        <dbReference type="ChEBI" id="CHEBI:15378"/>
        <dbReference type="ChEBI" id="CHEBI:30616"/>
        <dbReference type="ChEBI" id="CHEBI:57476"/>
        <dbReference type="ChEBI" id="CHEBI:57590"/>
        <dbReference type="ChEBI" id="CHEBI:456216"/>
        <dbReference type="EC" id="2.7.1.39"/>
    </reaction>
</comment>
<comment type="pathway">
    <text evidence="1">Amino-acid biosynthesis; L-threonine biosynthesis; L-threonine from L-aspartate: step 4/5.</text>
</comment>
<comment type="similarity">
    <text evidence="1">Belongs to the pseudomonas-type ThrB family.</text>
</comment>
<name>KHSE_RHOPS</name>
<feature type="chain" id="PRO_0000300805" description="Homoserine kinase">
    <location>
        <begin position="1"/>
        <end position="326"/>
    </location>
</feature>
<gene>
    <name evidence="1" type="primary">thrB</name>
    <name type="ordered locus">RPD_4029</name>
</gene>
<accession>Q131J1</accession>
<evidence type="ECO:0000255" key="1">
    <source>
        <dbReference type="HAMAP-Rule" id="MF_00301"/>
    </source>
</evidence>
<organism>
    <name type="scientific">Rhodopseudomonas palustris (strain BisB5)</name>
    <dbReference type="NCBI Taxonomy" id="316057"/>
    <lineage>
        <taxon>Bacteria</taxon>
        <taxon>Pseudomonadati</taxon>
        <taxon>Pseudomonadota</taxon>
        <taxon>Alphaproteobacteria</taxon>
        <taxon>Hyphomicrobiales</taxon>
        <taxon>Nitrobacteraceae</taxon>
        <taxon>Rhodopseudomonas</taxon>
    </lineage>
</organism>
<keyword id="KW-0028">Amino-acid biosynthesis</keyword>
<keyword id="KW-0067">ATP-binding</keyword>
<keyword id="KW-0418">Kinase</keyword>
<keyword id="KW-0547">Nucleotide-binding</keyword>
<keyword id="KW-0791">Threonine biosynthesis</keyword>
<keyword id="KW-0808">Transferase</keyword>
<reference key="1">
    <citation type="submission" date="2006-03" db="EMBL/GenBank/DDBJ databases">
        <title>Complete sequence of Rhodopseudomonas palustris BisB5.</title>
        <authorList>
            <consortium name="US DOE Joint Genome Institute"/>
            <person name="Copeland A."/>
            <person name="Lucas S."/>
            <person name="Lapidus A."/>
            <person name="Barry K."/>
            <person name="Detter J.C."/>
            <person name="Glavina del Rio T."/>
            <person name="Hammon N."/>
            <person name="Israni S."/>
            <person name="Dalin E."/>
            <person name="Tice H."/>
            <person name="Pitluck S."/>
            <person name="Chain P."/>
            <person name="Malfatti S."/>
            <person name="Shin M."/>
            <person name="Vergez L."/>
            <person name="Schmutz J."/>
            <person name="Larimer F."/>
            <person name="Land M."/>
            <person name="Hauser L."/>
            <person name="Pelletier D.A."/>
            <person name="Kyrpides N."/>
            <person name="Lykidis A."/>
            <person name="Oda Y."/>
            <person name="Harwood C.S."/>
            <person name="Richardson P."/>
        </authorList>
    </citation>
    <scope>NUCLEOTIDE SEQUENCE [LARGE SCALE GENOMIC DNA]</scope>
    <source>
        <strain>BisB5</strain>
    </source>
</reference>
<proteinExistence type="inferred from homology"/>
<protein>
    <recommendedName>
        <fullName evidence="1">Homoserine kinase</fullName>
        <shortName evidence="1">HK</shortName>
        <shortName evidence="1">HSK</shortName>
        <ecNumber evidence="1">2.7.1.39</ecNumber>
    </recommendedName>
</protein>
<dbReference type="EC" id="2.7.1.39" evidence="1"/>
<dbReference type="EMBL" id="CP000283">
    <property type="protein sequence ID" value="ABE41248.1"/>
    <property type="molecule type" value="Genomic_DNA"/>
</dbReference>
<dbReference type="SMR" id="Q131J1"/>
<dbReference type="STRING" id="316057.RPD_4029"/>
<dbReference type="KEGG" id="rpd:RPD_4029"/>
<dbReference type="eggNOG" id="COG2334">
    <property type="taxonomic scope" value="Bacteria"/>
</dbReference>
<dbReference type="HOGENOM" id="CLU_053300_1_0_5"/>
<dbReference type="BioCyc" id="RPAL316057:RPD_RS20260-MONOMER"/>
<dbReference type="UniPathway" id="UPA00050">
    <property type="reaction ID" value="UER00064"/>
</dbReference>
<dbReference type="Proteomes" id="UP000001818">
    <property type="component" value="Chromosome"/>
</dbReference>
<dbReference type="GO" id="GO:0005524">
    <property type="term" value="F:ATP binding"/>
    <property type="evidence" value="ECO:0007669"/>
    <property type="project" value="UniProtKB-KW"/>
</dbReference>
<dbReference type="GO" id="GO:0004413">
    <property type="term" value="F:homoserine kinase activity"/>
    <property type="evidence" value="ECO:0007669"/>
    <property type="project" value="UniProtKB-UniRule"/>
</dbReference>
<dbReference type="GO" id="GO:0009088">
    <property type="term" value="P:threonine biosynthetic process"/>
    <property type="evidence" value="ECO:0007669"/>
    <property type="project" value="UniProtKB-UniRule"/>
</dbReference>
<dbReference type="CDD" id="cd05153">
    <property type="entry name" value="HomoserineK_II"/>
    <property type="match status" value="1"/>
</dbReference>
<dbReference type="FunFam" id="3.90.1200.10:FF:000041">
    <property type="entry name" value="Homoserine kinase"/>
    <property type="match status" value="1"/>
</dbReference>
<dbReference type="Gene3D" id="3.90.1200.10">
    <property type="match status" value="1"/>
</dbReference>
<dbReference type="Gene3D" id="3.30.200.20">
    <property type="entry name" value="Phosphorylase Kinase, domain 1"/>
    <property type="match status" value="1"/>
</dbReference>
<dbReference type="HAMAP" id="MF_00301">
    <property type="entry name" value="Homoser_kinase_2"/>
    <property type="match status" value="1"/>
</dbReference>
<dbReference type="InterPro" id="IPR002575">
    <property type="entry name" value="Aminoglycoside_PTrfase"/>
</dbReference>
<dbReference type="InterPro" id="IPR005280">
    <property type="entry name" value="Homoserine_kinase_II"/>
</dbReference>
<dbReference type="InterPro" id="IPR011009">
    <property type="entry name" value="Kinase-like_dom_sf"/>
</dbReference>
<dbReference type="InterPro" id="IPR050249">
    <property type="entry name" value="Pseudomonas-type_ThrB"/>
</dbReference>
<dbReference type="NCBIfam" id="NF003558">
    <property type="entry name" value="PRK05231.1"/>
    <property type="match status" value="1"/>
</dbReference>
<dbReference type="NCBIfam" id="TIGR00938">
    <property type="entry name" value="thrB_alt"/>
    <property type="match status" value="1"/>
</dbReference>
<dbReference type="PANTHER" id="PTHR21064:SF6">
    <property type="entry name" value="AMINOGLYCOSIDE PHOSPHOTRANSFERASE DOMAIN-CONTAINING PROTEIN"/>
    <property type="match status" value="1"/>
</dbReference>
<dbReference type="PANTHER" id="PTHR21064">
    <property type="entry name" value="AMINOGLYCOSIDE PHOSPHOTRANSFERASE DOMAIN-CONTAINING PROTEIN-RELATED"/>
    <property type="match status" value="1"/>
</dbReference>
<dbReference type="Pfam" id="PF01636">
    <property type="entry name" value="APH"/>
    <property type="match status" value="1"/>
</dbReference>
<dbReference type="SUPFAM" id="SSF56112">
    <property type="entry name" value="Protein kinase-like (PK-like)"/>
    <property type="match status" value="1"/>
</dbReference>